<protein>
    <recommendedName>
        <fullName evidence="1">Octanoyltransferase</fullName>
        <ecNumber evidence="1">2.3.1.181</ecNumber>
    </recommendedName>
    <alternativeName>
        <fullName evidence="1">Lipoate-protein ligase B</fullName>
    </alternativeName>
    <alternativeName>
        <fullName evidence="1">Lipoyl/octanoyl transferase</fullName>
    </alternativeName>
    <alternativeName>
        <fullName evidence="1">Octanoyl-[acyl-carrier-protein]-protein N-octanoyltransferase</fullName>
    </alternativeName>
</protein>
<keyword id="KW-0012">Acyltransferase</keyword>
<keyword id="KW-0963">Cytoplasm</keyword>
<keyword id="KW-0808">Transferase</keyword>
<feature type="chain" id="PRO_1000073999" description="Octanoyltransferase">
    <location>
        <begin position="1"/>
        <end position="242"/>
    </location>
</feature>
<feature type="domain" description="BPL/LPL catalytic" evidence="2">
    <location>
        <begin position="31"/>
        <end position="206"/>
    </location>
</feature>
<feature type="active site" description="Acyl-thioester intermediate" evidence="1">
    <location>
        <position position="168"/>
    </location>
</feature>
<feature type="binding site" evidence="1">
    <location>
        <begin position="70"/>
        <end position="77"/>
    </location>
    <ligand>
        <name>substrate</name>
    </ligand>
</feature>
<feature type="binding site" evidence="1">
    <location>
        <begin position="137"/>
        <end position="139"/>
    </location>
    <ligand>
        <name>substrate</name>
    </ligand>
</feature>
<feature type="binding site" evidence="1">
    <location>
        <begin position="150"/>
        <end position="152"/>
    </location>
    <ligand>
        <name>substrate</name>
    </ligand>
</feature>
<feature type="site" description="Lowers pKa of active site Cys" evidence="1">
    <location>
        <position position="134"/>
    </location>
</feature>
<accession>A9NDX7</accession>
<organism>
    <name type="scientific">Coxiella burnetii (strain RSA 331 / Henzerling II)</name>
    <dbReference type="NCBI Taxonomy" id="360115"/>
    <lineage>
        <taxon>Bacteria</taxon>
        <taxon>Pseudomonadati</taxon>
        <taxon>Pseudomonadota</taxon>
        <taxon>Gammaproteobacteria</taxon>
        <taxon>Legionellales</taxon>
        <taxon>Coxiellaceae</taxon>
        <taxon>Coxiella</taxon>
    </lineage>
</organism>
<proteinExistence type="inferred from homology"/>
<reference key="1">
    <citation type="submission" date="2007-11" db="EMBL/GenBank/DDBJ databases">
        <title>Genome sequencing of phylogenetically and phenotypically diverse Coxiella burnetii isolates.</title>
        <authorList>
            <person name="Seshadri R."/>
            <person name="Samuel J.E."/>
        </authorList>
    </citation>
    <scope>NUCLEOTIDE SEQUENCE [LARGE SCALE GENOMIC DNA]</scope>
    <source>
        <strain>RSA 331 / Henzerling II</strain>
    </source>
</reference>
<gene>
    <name evidence="1" type="primary">lipB</name>
    <name type="ordered locus">COXBURSA331_A1413</name>
</gene>
<sequence length="242" mass="27460">MNDVIIRQLAHLIPYQPLWEAMQTFTARRQSQTTDEIWFLEHEPVFTQGLAGKPEHVLNSGNIPLIRTDRGGQVTYHGPGQLMMYLLLDLNRLGLSTRTFVRTIENTVAESLQEWGIPAQGKETAPGVYVDDKKICSIGLRVRKGFSYHGLALNVAMDLTPFSCINPCGFKGLMMTQIQDYVNPIEMDAVKRTIIPLFLKNFGYNQPAIMVETSLEFLIDDHLRSFSEKLGERETVTNSRQN</sequence>
<dbReference type="EC" id="2.3.1.181" evidence="1"/>
<dbReference type="EMBL" id="CP000890">
    <property type="protein sequence ID" value="ABX77880.1"/>
    <property type="molecule type" value="Genomic_DNA"/>
</dbReference>
<dbReference type="RefSeq" id="WP_005772535.1">
    <property type="nucleotide sequence ID" value="NC_010117.1"/>
</dbReference>
<dbReference type="SMR" id="A9NDX7"/>
<dbReference type="KEGG" id="cbs:COXBURSA331_A1413"/>
<dbReference type="HOGENOM" id="CLU_035168_3_1_6"/>
<dbReference type="UniPathway" id="UPA00538">
    <property type="reaction ID" value="UER00592"/>
</dbReference>
<dbReference type="GO" id="GO:0005737">
    <property type="term" value="C:cytoplasm"/>
    <property type="evidence" value="ECO:0007669"/>
    <property type="project" value="UniProtKB-SubCell"/>
</dbReference>
<dbReference type="GO" id="GO:0033819">
    <property type="term" value="F:lipoyl(octanoyl) transferase activity"/>
    <property type="evidence" value="ECO:0007669"/>
    <property type="project" value="UniProtKB-EC"/>
</dbReference>
<dbReference type="GO" id="GO:0036211">
    <property type="term" value="P:protein modification process"/>
    <property type="evidence" value="ECO:0007669"/>
    <property type="project" value="InterPro"/>
</dbReference>
<dbReference type="CDD" id="cd16444">
    <property type="entry name" value="LipB"/>
    <property type="match status" value="1"/>
</dbReference>
<dbReference type="FunFam" id="3.30.930.10:FF:000020">
    <property type="entry name" value="Octanoyltransferase"/>
    <property type="match status" value="1"/>
</dbReference>
<dbReference type="Gene3D" id="3.30.930.10">
    <property type="entry name" value="Bira Bifunctional Protein, Domain 2"/>
    <property type="match status" value="1"/>
</dbReference>
<dbReference type="HAMAP" id="MF_00013">
    <property type="entry name" value="LipB"/>
    <property type="match status" value="1"/>
</dbReference>
<dbReference type="InterPro" id="IPR045864">
    <property type="entry name" value="aa-tRNA-synth_II/BPL/LPL"/>
</dbReference>
<dbReference type="InterPro" id="IPR004143">
    <property type="entry name" value="BPL_LPL_catalytic"/>
</dbReference>
<dbReference type="InterPro" id="IPR000544">
    <property type="entry name" value="Octanoyltransferase"/>
</dbReference>
<dbReference type="InterPro" id="IPR020605">
    <property type="entry name" value="Octanoyltransferase_CS"/>
</dbReference>
<dbReference type="NCBIfam" id="TIGR00214">
    <property type="entry name" value="lipB"/>
    <property type="match status" value="1"/>
</dbReference>
<dbReference type="NCBIfam" id="NF010922">
    <property type="entry name" value="PRK14342.1"/>
    <property type="match status" value="1"/>
</dbReference>
<dbReference type="PANTHER" id="PTHR10993:SF7">
    <property type="entry name" value="LIPOYLTRANSFERASE 2, MITOCHONDRIAL-RELATED"/>
    <property type="match status" value="1"/>
</dbReference>
<dbReference type="PANTHER" id="PTHR10993">
    <property type="entry name" value="OCTANOYLTRANSFERASE"/>
    <property type="match status" value="1"/>
</dbReference>
<dbReference type="Pfam" id="PF21948">
    <property type="entry name" value="LplA-B_cat"/>
    <property type="match status" value="1"/>
</dbReference>
<dbReference type="PIRSF" id="PIRSF016262">
    <property type="entry name" value="LPLase"/>
    <property type="match status" value="1"/>
</dbReference>
<dbReference type="SUPFAM" id="SSF55681">
    <property type="entry name" value="Class II aaRS and biotin synthetases"/>
    <property type="match status" value="1"/>
</dbReference>
<dbReference type="PROSITE" id="PS51733">
    <property type="entry name" value="BPL_LPL_CATALYTIC"/>
    <property type="match status" value="1"/>
</dbReference>
<dbReference type="PROSITE" id="PS01313">
    <property type="entry name" value="LIPB"/>
    <property type="match status" value="1"/>
</dbReference>
<evidence type="ECO:0000255" key="1">
    <source>
        <dbReference type="HAMAP-Rule" id="MF_00013"/>
    </source>
</evidence>
<evidence type="ECO:0000255" key="2">
    <source>
        <dbReference type="PROSITE-ProRule" id="PRU01067"/>
    </source>
</evidence>
<comment type="function">
    <text evidence="1">Catalyzes the transfer of endogenously produced octanoic acid from octanoyl-acyl-carrier-protein onto the lipoyl domains of lipoate-dependent enzymes. Lipoyl-ACP can also act as a substrate although octanoyl-ACP is likely to be the physiological substrate.</text>
</comment>
<comment type="catalytic activity">
    <reaction evidence="1">
        <text>octanoyl-[ACP] + L-lysyl-[protein] = N(6)-octanoyl-L-lysyl-[protein] + holo-[ACP] + H(+)</text>
        <dbReference type="Rhea" id="RHEA:17665"/>
        <dbReference type="Rhea" id="RHEA-COMP:9636"/>
        <dbReference type="Rhea" id="RHEA-COMP:9685"/>
        <dbReference type="Rhea" id="RHEA-COMP:9752"/>
        <dbReference type="Rhea" id="RHEA-COMP:9928"/>
        <dbReference type="ChEBI" id="CHEBI:15378"/>
        <dbReference type="ChEBI" id="CHEBI:29969"/>
        <dbReference type="ChEBI" id="CHEBI:64479"/>
        <dbReference type="ChEBI" id="CHEBI:78463"/>
        <dbReference type="ChEBI" id="CHEBI:78809"/>
        <dbReference type="EC" id="2.3.1.181"/>
    </reaction>
</comment>
<comment type="pathway">
    <text evidence="1">Protein modification; protein lipoylation via endogenous pathway; protein N(6)-(lipoyl)lysine from octanoyl-[acyl-carrier-protein]: step 1/2.</text>
</comment>
<comment type="subcellular location">
    <subcellularLocation>
        <location evidence="1">Cytoplasm</location>
    </subcellularLocation>
</comment>
<comment type="miscellaneous">
    <text evidence="1">In the reaction, the free carboxyl group of octanoic acid is attached via an amide linkage to the epsilon-amino group of a specific lysine residue of lipoyl domains of lipoate-dependent enzymes.</text>
</comment>
<comment type="similarity">
    <text evidence="1">Belongs to the LipB family.</text>
</comment>
<name>LIPB_COXBR</name>